<name>NHAA1_CLOB8</name>
<organism>
    <name type="scientific">Clostridium beijerinckii (strain ATCC 51743 / NCIMB 8052)</name>
    <name type="common">Clostridium acetobutylicum</name>
    <dbReference type="NCBI Taxonomy" id="290402"/>
    <lineage>
        <taxon>Bacteria</taxon>
        <taxon>Bacillati</taxon>
        <taxon>Bacillota</taxon>
        <taxon>Clostridia</taxon>
        <taxon>Eubacteriales</taxon>
        <taxon>Clostridiaceae</taxon>
        <taxon>Clostridium</taxon>
    </lineage>
</organism>
<sequence>MKNKIKNKIKNPFLQFFKNESSSGIVLMFCAIIAIIIANSNFSSMYNNIIHTYITIGYKDFSLSMSILHWINDGLMAIFFLVVGMEIKREIVFGELKSFKKTILPVSAAIGGMVVPAIIYALFNFNQPTIIGWGIPMATDIAFALGILSLVGKKAPKGIIIFLTALAIVDDLGAIIVIAIFYTSEISWIALILGLIIFLAIILANKLNVKNKWLYIIFGIALWICFLKSGVHETIAGVLLGMGLPIGKNMEEFRTSILYRFEHVLTPLSSFIIMPIFALANSGITIDINSLSAAIMNPVSLGIIFGLFIGKQIGIFGASYILVKLKIAKLPSKVTKRHLYGASVLGGIGFTMSLFVSSLSFTEESALSMAKISIIIASILSAAFGAAIFKIIKFKNEERV</sequence>
<protein>
    <recommendedName>
        <fullName evidence="1">Na(+)/H(+) antiporter NhaA 1</fullName>
    </recommendedName>
    <alternativeName>
        <fullName evidence="1">Sodium/proton antiporter NhaA 1</fullName>
    </alternativeName>
</protein>
<keyword id="KW-0050">Antiport</keyword>
<keyword id="KW-1003">Cell membrane</keyword>
<keyword id="KW-0406">Ion transport</keyword>
<keyword id="KW-0472">Membrane</keyword>
<keyword id="KW-0915">Sodium</keyword>
<keyword id="KW-0739">Sodium transport</keyword>
<keyword id="KW-0812">Transmembrane</keyword>
<keyword id="KW-1133">Transmembrane helix</keyword>
<keyword id="KW-0813">Transport</keyword>
<accession>A6LTE4</accession>
<proteinExistence type="inferred from homology"/>
<comment type="function">
    <text evidence="1">Na(+)/H(+) antiporter that extrudes sodium in exchange for external protons.</text>
</comment>
<comment type="catalytic activity">
    <reaction evidence="1">
        <text>Na(+)(in) + 2 H(+)(out) = Na(+)(out) + 2 H(+)(in)</text>
        <dbReference type="Rhea" id="RHEA:29251"/>
        <dbReference type="ChEBI" id="CHEBI:15378"/>
        <dbReference type="ChEBI" id="CHEBI:29101"/>
    </reaction>
    <physiologicalReaction direction="left-to-right" evidence="1">
        <dbReference type="Rhea" id="RHEA:29252"/>
    </physiologicalReaction>
</comment>
<comment type="subcellular location">
    <subcellularLocation>
        <location evidence="1">Cell membrane</location>
        <topology evidence="1">Multi-pass membrane protein</topology>
    </subcellularLocation>
</comment>
<comment type="similarity">
    <text evidence="1">Belongs to the NhaA Na(+)/H(+) (TC 2.A.33) antiporter family.</text>
</comment>
<feature type="chain" id="PRO_0000334269" description="Na(+)/H(+) antiporter NhaA 1">
    <location>
        <begin position="1"/>
        <end position="400"/>
    </location>
</feature>
<feature type="transmembrane region" description="Helical" evidence="1">
    <location>
        <begin position="25"/>
        <end position="45"/>
    </location>
</feature>
<feature type="transmembrane region" description="Helical" evidence="1">
    <location>
        <begin position="67"/>
        <end position="87"/>
    </location>
</feature>
<feature type="transmembrane region" description="Helical" evidence="1">
    <location>
        <begin position="103"/>
        <end position="123"/>
    </location>
</feature>
<feature type="transmembrane region" description="Helical" evidence="1">
    <location>
        <begin position="130"/>
        <end position="150"/>
    </location>
</feature>
<feature type="transmembrane region" description="Helical" evidence="1">
    <location>
        <begin position="159"/>
        <end position="179"/>
    </location>
</feature>
<feature type="transmembrane region" description="Helical" evidence="1">
    <location>
        <begin position="184"/>
        <end position="204"/>
    </location>
</feature>
<feature type="transmembrane region" description="Helical" evidence="1">
    <location>
        <begin position="213"/>
        <end position="233"/>
    </location>
</feature>
<feature type="transmembrane region" description="Helical" evidence="1">
    <location>
        <begin position="264"/>
        <end position="284"/>
    </location>
</feature>
<feature type="transmembrane region" description="Helical" evidence="1">
    <location>
        <begin position="303"/>
        <end position="323"/>
    </location>
</feature>
<feature type="transmembrane region" description="Helical" evidence="1">
    <location>
        <begin position="339"/>
        <end position="359"/>
    </location>
</feature>
<feature type="transmembrane region" description="Helical" evidence="1">
    <location>
        <begin position="372"/>
        <end position="392"/>
    </location>
</feature>
<reference key="1">
    <citation type="submission" date="2007-06" db="EMBL/GenBank/DDBJ databases">
        <title>Complete sequence of Clostridium beijerinckii NCIMB 8052.</title>
        <authorList>
            <consortium name="US DOE Joint Genome Institute"/>
            <person name="Copeland A."/>
            <person name="Lucas S."/>
            <person name="Lapidus A."/>
            <person name="Barry K."/>
            <person name="Detter J.C."/>
            <person name="Glavina del Rio T."/>
            <person name="Hammon N."/>
            <person name="Israni S."/>
            <person name="Dalin E."/>
            <person name="Tice H."/>
            <person name="Pitluck S."/>
            <person name="Sims D."/>
            <person name="Brettin T."/>
            <person name="Bruce D."/>
            <person name="Tapia R."/>
            <person name="Brainard J."/>
            <person name="Schmutz J."/>
            <person name="Larimer F."/>
            <person name="Land M."/>
            <person name="Hauser L."/>
            <person name="Kyrpides N."/>
            <person name="Mikhailova N."/>
            <person name="Bennet G."/>
            <person name="Cann I."/>
            <person name="Chen J.-S."/>
            <person name="Contreras A.L."/>
            <person name="Jones D."/>
            <person name="Kashket E."/>
            <person name="Mitchell W."/>
            <person name="Stoddard S."/>
            <person name="Schwarz W."/>
            <person name="Qureshi N."/>
            <person name="Young M."/>
            <person name="Shi Z."/>
            <person name="Ezeji T."/>
            <person name="White B."/>
            <person name="Blaschek H."/>
            <person name="Richardson P."/>
        </authorList>
    </citation>
    <scope>NUCLEOTIDE SEQUENCE [LARGE SCALE GENOMIC DNA]</scope>
    <source>
        <strain>ATCC 51743 / NCIMB 8052</strain>
    </source>
</reference>
<gene>
    <name evidence="1" type="primary">nhaA1</name>
    <name type="ordered locus">Cbei_1446</name>
</gene>
<evidence type="ECO:0000255" key="1">
    <source>
        <dbReference type="HAMAP-Rule" id="MF_01844"/>
    </source>
</evidence>
<dbReference type="EMBL" id="CP000721">
    <property type="protein sequence ID" value="ABR33624.1"/>
    <property type="molecule type" value="Genomic_DNA"/>
</dbReference>
<dbReference type="RefSeq" id="WP_011968778.1">
    <property type="nucleotide sequence ID" value="NC_009617.1"/>
</dbReference>
<dbReference type="SMR" id="A6LTE4"/>
<dbReference type="KEGG" id="cbe:Cbei_1446"/>
<dbReference type="eggNOG" id="COG3004">
    <property type="taxonomic scope" value="Bacteria"/>
</dbReference>
<dbReference type="HOGENOM" id="CLU_015803_1_2_9"/>
<dbReference type="Proteomes" id="UP000000565">
    <property type="component" value="Chromosome"/>
</dbReference>
<dbReference type="GO" id="GO:0005886">
    <property type="term" value="C:plasma membrane"/>
    <property type="evidence" value="ECO:0007669"/>
    <property type="project" value="UniProtKB-SubCell"/>
</dbReference>
<dbReference type="GO" id="GO:0015385">
    <property type="term" value="F:sodium:proton antiporter activity"/>
    <property type="evidence" value="ECO:0007669"/>
    <property type="project" value="TreeGrafter"/>
</dbReference>
<dbReference type="GO" id="GO:0006885">
    <property type="term" value="P:regulation of pH"/>
    <property type="evidence" value="ECO:0007669"/>
    <property type="project" value="InterPro"/>
</dbReference>
<dbReference type="Gene3D" id="1.20.1530.10">
    <property type="entry name" value="Na+/H+ antiporter like domain"/>
    <property type="match status" value="1"/>
</dbReference>
<dbReference type="HAMAP" id="MF_01844">
    <property type="entry name" value="NhaA"/>
    <property type="match status" value="1"/>
</dbReference>
<dbReference type="InterPro" id="IPR023171">
    <property type="entry name" value="Na/H_antiporter_dom_sf"/>
</dbReference>
<dbReference type="InterPro" id="IPR004670">
    <property type="entry name" value="NhaA"/>
</dbReference>
<dbReference type="NCBIfam" id="TIGR00773">
    <property type="entry name" value="NhaA"/>
    <property type="match status" value="1"/>
</dbReference>
<dbReference type="NCBIfam" id="NF007111">
    <property type="entry name" value="PRK09560.1"/>
    <property type="match status" value="1"/>
</dbReference>
<dbReference type="NCBIfam" id="NF007112">
    <property type="entry name" value="PRK09561.1"/>
    <property type="match status" value="1"/>
</dbReference>
<dbReference type="PANTHER" id="PTHR30341:SF0">
    <property type="entry name" value="NA(+)_H(+) ANTIPORTER NHAA"/>
    <property type="match status" value="1"/>
</dbReference>
<dbReference type="PANTHER" id="PTHR30341">
    <property type="entry name" value="SODIUM ION/PROTON ANTIPORTER NHAA-RELATED"/>
    <property type="match status" value="1"/>
</dbReference>
<dbReference type="Pfam" id="PF06965">
    <property type="entry name" value="Na_H_antiport_1"/>
    <property type="match status" value="1"/>
</dbReference>